<keyword id="KW-0963">Cytoplasm</keyword>
<keyword id="KW-0444">Lipid biosynthesis</keyword>
<keyword id="KW-0443">Lipid metabolism</keyword>
<keyword id="KW-0520">NAD</keyword>
<keyword id="KW-0521">NADP</keyword>
<keyword id="KW-0547">Nucleotide-binding</keyword>
<keyword id="KW-0560">Oxidoreductase</keyword>
<keyword id="KW-0594">Phospholipid biosynthesis</keyword>
<keyword id="KW-1208">Phospholipid metabolism</keyword>
<dbReference type="EC" id="1.1.1.94" evidence="1"/>
<dbReference type="EMBL" id="FM177140">
    <property type="protein sequence ID" value="CAQ66147.1"/>
    <property type="molecule type" value="Genomic_DNA"/>
</dbReference>
<dbReference type="SMR" id="B3WCP6"/>
<dbReference type="KEGG" id="lcb:LCABL_10610"/>
<dbReference type="HOGENOM" id="CLU_033449_0_2_9"/>
<dbReference type="UniPathway" id="UPA00940"/>
<dbReference type="GO" id="GO:0005829">
    <property type="term" value="C:cytosol"/>
    <property type="evidence" value="ECO:0007669"/>
    <property type="project" value="TreeGrafter"/>
</dbReference>
<dbReference type="GO" id="GO:0047952">
    <property type="term" value="F:glycerol-3-phosphate dehydrogenase [NAD(P)+] activity"/>
    <property type="evidence" value="ECO:0007669"/>
    <property type="project" value="UniProtKB-UniRule"/>
</dbReference>
<dbReference type="GO" id="GO:0051287">
    <property type="term" value="F:NAD binding"/>
    <property type="evidence" value="ECO:0007669"/>
    <property type="project" value="InterPro"/>
</dbReference>
<dbReference type="GO" id="GO:0005975">
    <property type="term" value="P:carbohydrate metabolic process"/>
    <property type="evidence" value="ECO:0007669"/>
    <property type="project" value="InterPro"/>
</dbReference>
<dbReference type="GO" id="GO:0046167">
    <property type="term" value="P:glycerol-3-phosphate biosynthetic process"/>
    <property type="evidence" value="ECO:0007669"/>
    <property type="project" value="UniProtKB-UniRule"/>
</dbReference>
<dbReference type="GO" id="GO:0046168">
    <property type="term" value="P:glycerol-3-phosphate catabolic process"/>
    <property type="evidence" value="ECO:0007669"/>
    <property type="project" value="InterPro"/>
</dbReference>
<dbReference type="GO" id="GO:0006650">
    <property type="term" value="P:glycerophospholipid metabolic process"/>
    <property type="evidence" value="ECO:0007669"/>
    <property type="project" value="UniProtKB-UniRule"/>
</dbReference>
<dbReference type="GO" id="GO:0008654">
    <property type="term" value="P:phospholipid biosynthetic process"/>
    <property type="evidence" value="ECO:0007669"/>
    <property type="project" value="UniProtKB-KW"/>
</dbReference>
<dbReference type="FunFam" id="1.10.1040.10:FF:000001">
    <property type="entry name" value="Glycerol-3-phosphate dehydrogenase [NAD(P)+]"/>
    <property type="match status" value="1"/>
</dbReference>
<dbReference type="FunFam" id="3.40.50.720:FF:000019">
    <property type="entry name" value="Glycerol-3-phosphate dehydrogenase [NAD(P)+]"/>
    <property type="match status" value="1"/>
</dbReference>
<dbReference type="Gene3D" id="1.10.1040.10">
    <property type="entry name" value="N-(1-d-carboxylethyl)-l-norvaline Dehydrogenase, domain 2"/>
    <property type="match status" value="1"/>
</dbReference>
<dbReference type="Gene3D" id="3.40.50.720">
    <property type="entry name" value="NAD(P)-binding Rossmann-like Domain"/>
    <property type="match status" value="1"/>
</dbReference>
<dbReference type="HAMAP" id="MF_00394">
    <property type="entry name" value="NAD_Glyc3P_dehydrog"/>
    <property type="match status" value="1"/>
</dbReference>
<dbReference type="InterPro" id="IPR008927">
    <property type="entry name" value="6-PGluconate_DH-like_C_sf"/>
</dbReference>
<dbReference type="InterPro" id="IPR013328">
    <property type="entry name" value="6PGD_dom2"/>
</dbReference>
<dbReference type="InterPro" id="IPR006168">
    <property type="entry name" value="G3P_DH_NAD-dep"/>
</dbReference>
<dbReference type="InterPro" id="IPR006109">
    <property type="entry name" value="G3P_DH_NAD-dep_C"/>
</dbReference>
<dbReference type="InterPro" id="IPR011128">
    <property type="entry name" value="G3P_DH_NAD-dep_N"/>
</dbReference>
<dbReference type="InterPro" id="IPR036291">
    <property type="entry name" value="NAD(P)-bd_dom_sf"/>
</dbReference>
<dbReference type="NCBIfam" id="NF000940">
    <property type="entry name" value="PRK00094.1-2"/>
    <property type="match status" value="1"/>
</dbReference>
<dbReference type="NCBIfam" id="NF000941">
    <property type="entry name" value="PRK00094.1-3"/>
    <property type="match status" value="1"/>
</dbReference>
<dbReference type="NCBIfam" id="NF000942">
    <property type="entry name" value="PRK00094.1-4"/>
    <property type="match status" value="1"/>
</dbReference>
<dbReference type="PANTHER" id="PTHR11728">
    <property type="entry name" value="GLYCEROL-3-PHOSPHATE DEHYDROGENASE"/>
    <property type="match status" value="1"/>
</dbReference>
<dbReference type="PANTHER" id="PTHR11728:SF1">
    <property type="entry name" value="GLYCEROL-3-PHOSPHATE DEHYDROGENASE [NAD(+)] 2, CHLOROPLASTIC"/>
    <property type="match status" value="1"/>
</dbReference>
<dbReference type="Pfam" id="PF07479">
    <property type="entry name" value="NAD_Gly3P_dh_C"/>
    <property type="match status" value="1"/>
</dbReference>
<dbReference type="Pfam" id="PF01210">
    <property type="entry name" value="NAD_Gly3P_dh_N"/>
    <property type="match status" value="1"/>
</dbReference>
<dbReference type="PIRSF" id="PIRSF000114">
    <property type="entry name" value="Glycerol-3-P_dh"/>
    <property type="match status" value="1"/>
</dbReference>
<dbReference type="PRINTS" id="PR00077">
    <property type="entry name" value="GPDHDRGNASE"/>
</dbReference>
<dbReference type="SUPFAM" id="SSF48179">
    <property type="entry name" value="6-phosphogluconate dehydrogenase C-terminal domain-like"/>
    <property type="match status" value="1"/>
</dbReference>
<dbReference type="SUPFAM" id="SSF51735">
    <property type="entry name" value="NAD(P)-binding Rossmann-fold domains"/>
    <property type="match status" value="1"/>
</dbReference>
<dbReference type="PROSITE" id="PS00957">
    <property type="entry name" value="NAD_G3PDH"/>
    <property type="match status" value="1"/>
</dbReference>
<gene>
    <name evidence="1" type="primary">gpsA</name>
    <name type="ordered locus">LCABL_10610</name>
</gene>
<name>GPDA_LACCB</name>
<proteinExistence type="inferred from homology"/>
<sequence length="351" mass="37705">MPTKIAVLGAGSWGTVLANLLTENGHEVDLWSHNPDQVALMKRTHQNEHYLGAEFTLQPALHVTADLGQALDQAAVILFVVPTNAIRSVAEQVKPILQAHKGRGEQPIIVHAAKGLERGSELRISQVLAEVLPKELIQGIVVISGPSHAEDVATHDITTLTAASDDLKLAEKVQKLFMNDYFRLYTNTDVIGVEIGAALKNVIAIGAGALHGLGYGDNTKAALMTRGLAEISRVGVKLGAEPLTFIGLSGVGDLIVTCTSVHSRNWRAGNALGQGEKLPDVLKNMGMVVEGVSTTKVAHQMARELDVDMPITDAIYQVLYENAPIRTVITDLMKRSGKPEFDFDNASLQKP</sequence>
<evidence type="ECO:0000255" key="1">
    <source>
        <dbReference type="HAMAP-Rule" id="MF_00394"/>
    </source>
</evidence>
<reference key="1">
    <citation type="submission" date="2008-06" db="EMBL/GenBank/DDBJ databases">
        <title>Lactobacillus casei BL23 complete genome sequence.</title>
        <authorList>
            <person name="Maze A."/>
            <person name="Boel G."/>
            <person name="Bourand A."/>
            <person name="Loux V."/>
            <person name="Gibrat J.F."/>
            <person name="Zuniga M."/>
            <person name="Hartke A."/>
            <person name="Deutscher J."/>
        </authorList>
    </citation>
    <scope>NUCLEOTIDE SEQUENCE [LARGE SCALE GENOMIC DNA]</scope>
    <source>
        <strain>BL23</strain>
    </source>
</reference>
<protein>
    <recommendedName>
        <fullName evidence="1">Glycerol-3-phosphate dehydrogenase [NAD(P)+]</fullName>
        <ecNumber evidence="1">1.1.1.94</ecNumber>
    </recommendedName>
    <alternativeName>
        <fullName evidence="1">NAD(P)(+)-dependent glycerol-3-phosphate dehydrogenase</fullName>
    </alternativeName>
    <alternativeName>
        <fullName evidence="1">NAD(P)H-dependent dihydroxyacetone-phosphate reductase</fullName>
    </alternativeName>
</protein>
<organism>
    <name type="scientific">Lacticaseibacillus casei (strain BL23)</name>
    <name type="common">Lactobacillus casei</name>
    <dbReference type="NCBI Taxonomy" id="543734"/>
    <lineage>
        <taxon>Bacteria</taxon>
        <taxon>Bacillati</taxon>
        <taxon>Bacillota</taxon>
        <taxon>Bacilli</taxon>
        <taxon>Lactobacillales</taxon>
        <taxon>Lactobacillaceae</taxon>
        <taxon>Lacticaseibacillus</taxon>
    </lineage>
</organism>
<comment type="function">
    <text evidence="1">Catalyzes the reduction of the glycolytic intermediate dihydroxyacetone phosphate (DHAP) to sn-glycerol 3-phosphate (G3P), the key precursor for phospholipid synthesis.</text>
</comment>
<comment type="catalytic activity">
    <reaction evidence="1">
        <text>sn-glycerol 3-phosphate + NAD(+) = dihydroxyacetone phosphate + NADH + H(+)</text>
        <dbReference type="Rhea" id="RHEA:11092"/>
        <dbReference type="ChEBI" id="CHEBI:15378"/>
        <dbReference type="ChEBI" id="CHEBI:57540"/>
        <dbReference type="ChEBI" id="CHEBI:57597"/>
        <dbReference type="ChEBI" id="CHEBI:57642"/>
        <dbReference type="ChEBI" id="CHEBI:57945"/>
        <dbReference type="EC" id="1.1.1.94"/>
    </reaction>
    <physiologicalReaction direction="right-to-left" evidence="1">
        <dbReference type="Rhea" id="RHEA:11094"/>
    </physiologicalReaction>
</comment>
<comment type="catalytic activity">
    <reaction evidence="1">
        <text>sn-glycerol 3-phosphate + NADP(+) = dihydroxyacetone phosphate + NADPH + H(+)</text>
        <dbReference type="Rhea" id="RHEA:11096"/>
        <dbReference type="ChEBI" id="CHEBI:15378"/>
        <dbReference type="ChEBI" id="CHEBI:57597"/>
        <dbReference type="ChEBI" id="CHEBI:57642"/>
        <dbReference type="ChEBI" id="CHEBI:57783"/>
        <dbReference type="ChEBI" id="CHEBI:58349"/>
        <dbReference type="EC" id="1.1.1.94"/>
    </reaction>
    <physiologicalReaction direction="right-to-left" evidence="1">
        <dbReference type="Rhea" id="RHEA:11098"/>
    </physiologicalReaction>
</comment>
<comment type="pathway">
    <text evidence="1">Membrane lipid metabolism; glycerophospholipid metabolism.</text>
</comment>
<comment type="subcellular location">
    <subcellularLocation>
        <location evidence="1">Cytoplasm</location>
    </subcellularLocation>
</comment>
<comment type="similarity">
    <text evidence="1">Belongs to the NAD-dependent glycerol-3-phosphate dehydrogenase family.</text>
</comment>
<accession>B3WCP6</accession>
<feature type="chain" id="PRO_1000190160" description="Glycerol-3-phosphate dehydrogenase [NAD(P)+]">
    <location>
        <begin position="1"/>
        <end position="351"/>
    </location>
</feature>
<feature type="active site" description="Proton acceptor" evidence="1">
    <location>
        <position position="200"/>
    </location>
</feature>
<feature type="binding site" evidence="1">
    <location>
        <position position="12"/>
    </location>
    <ligand>
        <name>NADPH</name>
        <dbReference type="ChEBI" id="CHEBI:57783"/>
    </ligand>
</feature>
<feature type="binding site" evidence="1">
    <location>
        <position position="13"/>
    </location>
    <ligand>
        <name>NADPH</name>
        <dbReference type="ChEBI" id="CHEBI:57783"/>
    </ligand>
</feature>
<feature type="binding site" evidence="1">
    <location>
        <position position="33"/>
    </location>
    <ligand>
        <name>NADPH</name>
        <dbReference type="ChEBI" id="CHEBI:57783"/>
    </ligand>
</feature>
<feature type="binding site" evidence="1">
    <location>
        <position position="114"/>
    </location>
    <ligand>
        <name>NADPH</name>
        <dbReference type="ChEBI" id="CHEBI:57783"/>
    </ligand>
</feature>
<feature type="binding site" evidence="1">
    <location>
        <position position="114"/>
    </location>
    <ligand>
        <name>sn-glycerol 3-phosphate</name>
        <dbReference type="ChEBI" id="CHEBI:57597"/>
    </ligand>
</feature>
<feature type="binding site" evidence="1">
    <location>
        <position position="145"/>
    </location>
    <ligand>
        <name>sn-glycerol 3-phosphate</name>
        <dbReference type="ChEBI" id="CHEBI:57597"/>
    </ligand>
</feature>
<feature type="binding site" evidence="1">
    <location>
        <position position="147"/>
    </location>
    <ligand>
        <name>sn-glycerol 3-phosphate</name>
        <dbReference type="ChEBI" id="CHEBI:57597"/>
    </ligand>
</feature>
<feature type="binding site" evidence="1">
    <location>
        <position position="149"/>
    </location>
    <ligand>
        <name>NADPH</name>
        <dbReference type="ChEBI" id="CHEBI:57783"/>
    </ligand>
</feature>
<feature type="binding site" evidence="1">
    <location>
        <position position="200"/>
    </location>
    <ligand>
        <name>sn-glycerol 3-phosphate</name>
        <dbReference type="ChEBI" id="CHEBI:57597"/>
    </ligand>
</feature>
<feature type="binding site" evidence="1">
    <location>
        <position position="253"/>
    </location>
    <ligand>
        <name>sn-glycerol 3-phosphate</name>
        <dbReference type="ChEBI" id="CHEBI:57597"/>
    </ligand>
</feature>
<feature type="binding site" evidence="1">
    <location>
        <position position="263"/>
    </location>
    <ligand>
        <name>sn-glycerol 3-phosphate</name>
        <dbReference type="ChEBI" id="CHEBI:57597"/>
    </ligand>
</feature>
<feature type="binding site" evidence="1">
    <location>
        <position position="264"/>
    </location>
    <ligand>
        <name>NADPH</name>
        <dbReference type="ChEBI" id="CHEBI:57783"/>
    </ligand>
</feature>
<feature type="binding site" evidence="1">
    <location>
        <position position="264"/>
    </location>
    <ligand>
        <name>sn-glycerol 3-phosphate</name>
        <dbReference type="ChEBI" id="CHEBI:57597"/>
    </ligand>
</feature>
<feature type="binding site" evidence="1">
    <location>
        <position position="265"/>
    </location>
    <ligand>
        <name>sn-glycerol 3-phosphate</name>
        <dbReference type="ChEBI" id="CHEBI:57597"/>
    </ligand>
</feature>
<feature type="binding site" evidence="1">
    <location>
        <position position="288"/>
    </location>
    <ligand>
        <name>NADPH</name>
        <dbReference type="ChEBI" id="CHEBI:57783"/>
    </ligand>
</feature>
<feature type="binding site" evidence="1">
    <location>
        <position position="290"/>
    </location>
    <ligand>
        <name>NADPH</name>
        <dbReference type="ChEBI" id="CHEBI:57783"/>
    </ligand>
</feature>